<name>LDH2_LISMO</name>
<protein>
    <recommendedName>
        <fullName evidence="1">L-lactate dehydrogenase 2</fullName>
        <shortName evidence="1">L-LDH 2</shortName>
        <ecNumber evidence="1">1.1.1.27</ecNumber>
    </recommendedName>
</protein>
<keyword id="KW-0963">Cytoplasm</keyword>
<keyword id="KW-0520">NAD</keyword>
<keyword id="KW-0560">Oxidoreductase</keyword>
<keyword id="KW-1185">Reference proteome</keyword>
<feature type="chain" id="PRO_0000168366" description="L-lactate dehydrogenase 2">
    <location>
        <begin position="1"/>
        <end position="311"/>
    </location>
</feature>
<feature type="active site" description="Proton acceptor" evidence="1">
    <location>
        <position position="177"/>
    </location>
</feature>
<feature type="binding site" evidence="1">
    <location>
        <position position="14"/>
    </location>
    <ligand>
        <name>NAD(+)</name>
        <dbReference type="ChEBI" id="CHEBI:57540"/>
    </ligand>
</feature>
<feature type="binding site" evidence="1">
    <location>
        <position position="35"/>
    </location>
    <ligand>
        <name>NAD(+)</name>
        <dbReference type="ChEBI" id="CHEBI:57540"/>
    </ligand>
</feature>
<feature type="binding site" evidence="1">
    <location>
        <position position="40"/>
    </location>
    <ligand>
        <name>NAD(+)</name>
        <dbReference type="ChEBI" id="CHEBI:57540"/>
    </ligand>
</feature>
<feature type="binding site" evidence="1">
    <location>
        <position position="90"/>
    </location>
    <ligand>
        <name>substrate</name>
    </ligand>
</feature>
<feature type="binding site" evidence="1">
    <location>
        <begin position="120"/>
        <end position="122"/>
    </location>
    <ligand>
        <name>NAD(+)</name>
        <dbReference type="ChEBI" id="CHEBI:57540"/>
    </ligand>
</feature>
<feature type="binding site" evidence="1">
    <location>
        <begin position="122"/>
        <end position="125"/>
    </location>
    <ligand>
        <name>substrate</name>
    </ligand>
</feature>
<feature type="binding site" evidence="1">
    <location>
        <position position="145"/>
    </location>
    <ligand>
        <name>NAD(+)</name>
        <dbReference type="ChEBI" id="CHEBI:57540"/>
    </ligand>
</feature>
<feature type="binding site" evidence="1">
    <location>
        <begin position="150"/>
        <end position="153"/>
    </location>
    <ligand>
        <name>substrate</name>
    </ligand>
</feature>
<feature type="binding site" evidence="1">
    <location>
        <position position="230"/>
    </location>
    <ligand>
        <name>substrate</name>
    </ligand>
</feature>
<proteinExistence type="inferred from homology"/>
<sequence>MKPRKVMIIGAGNVGTAAAHAFVNQKFVEELILVDLNKERVEGNRKDLADAAAFMPGKMDITVRDASDCADVDIAVITVTAGPLKEGQTRLDELRSTSRIVSGIVPEMMKGGFNGIFLIATNPCDIITYQVWKLSGLPRERVLGTGVWLDTTRLRRLLAEKLDIAAQSIDAFILGEHGDSQFPVWSHSSIYGKPVNEYSLEKLGESLDLKQIGETARDTGFEIYHQKGCTEYGIGGTIVEICRHIFSGSQRALTVSCVLDGEYGESGLAIGVPAVLSQNGVKEIISLKLDEQEQQAFANSVSVIKKSIASI</sequence>
<dbReference type="EC" id="1.1.1.27" evidence="1"/>
<dbReference type="EMBL" id="AL591979">
    <property type="protein sequence ID" value="CAC99612.1"/>
    <property type="molecule type" value="Genomic_DNA"/>
</dbReference>
<dbReference type="PIR" id="AF1266">
    <property type="entry name" value="AF1266"/>
</dbReference>
<dbReference type="RefSeq" id="NP_465059.1">
    <property type="nucleotide sequence ID" value="NC_003210.1"/>
</dbReference>
<dbReference type="RefSeq" id="WP_003732587.1">
    <property type="nucleotide sequence ID" value="NZ_CP149495.1"/>
</dbReference>
<dbReference type="SMR" id="Q8Y6Z6"/>
<dbReference type="STRING" id="169963.gene:17594191"/>
<dbReference type="PaxDb" id="169963-lmo1534"/>
<dbReference type="EnsemblBacteria" id="CAC99612">
    <property type="protein sequence ID" value="CAC99612"/>
    <property type="gene ID" value="CAC99612"/>
</dbReference>
<dbReference type="GeneID" id="987808"/>
<dbReference type="KEGG" id="lmo:lmo1534"/>
<dbReference type="PATRIC" id="fig|169963.11.peg.1575"/>
<dbReference type="eggNOG" id="COG0039">
    <property type="taxonomic scope" value="Bacteria"/>
</dbReference>
<dbReference type="HOGENOM" id="CLU_045401_1_2_9"/>
<dbReference type="OrthoDB" id="9802969at2"/>
<dbReference type="PhylomeDB" id="Q8Y6Z6"/>
<dbReference type="BioCyc" id="LMON169963:LMO1534-MONOMER"/>
<dbReference type="UniPathway" id="UPA00554">
    <property type="reaction ID" value="UER00611"/>
</dbReference>
<dbReference type="Proteomes" id="UP000000817">
    <property type="component" value="Chromosome"/>
</dbReference>
<dbReference type="GO" id="GO:0005737">
    <property type="term" value="C:cytoplasm"/>
    <property type="evidence" value="ECO:0007669"/>
    <property type="project" value="UniProtKB-SubCell"/>
</dbReference>
<dbReference type="GO" id="GO:0004459">
    <property type="term" value="F:L-lactate dehydrogenase activity"/>
    <property type="evidence" value="ECO:0000318"/>
    <property type="project" value="GO_Central"/>
</dbReference>
<dbReference type="GO" id="GO:0006096">
    <property type="term" value="P:glycolytic process"/>
    <property type="evidence" value="ECO:0007669"/>
    <property type="project" value="UniProtKB-UniRule"/>
</dbReference>
<dbReference type="GO" id="GO:0006089">
    <property type="term" value="P:lactate metabolic process"/>
    <property type="evidence" value="ECO:0000318"/>
    <property type="project" value="GO_Central"/>
</dbReference>
<dbReference type="GO" id="GO:0006090">
    <property type="term" value="P:pyruvate metabolic process"/>
    <property type="evidence" value="ECO:0000318"/>
    <property type="project" value="GO_Central"/>
</dbReference>
<dbReference type="CDD" id="cd05291">
    <property type="entry name" value="HicDH_like"/>
    <property type="match status" value="1"/>
</dbReference>
<dbReference type="FunFam" id="3.90.110.10:FF:000016">
    <property type="entry name" value="L-lactate dehydrogenase"/>
    <property type="match status" value="1"/>
</dbReference>
<dbReference type="Gene3D" id="3.90.110.10">
    <property type="entry name" value="Lactate dehydrogenase/glycoside hydrolase, family 4, C-terminal"/>
    <property type="match status" value="1"/>
</dbReference>
<dbReference type="Gene3D" id="3.40.50.720">
    <property type="entry name" value="NAD(P)-binding Rossmann-like Domain"/>
    <property type="match status" value="1"/>
</dbReference>
<dbReference type="HAMAP" id="MF_00488">
    <property type="entry name" value="Lactate_dehydrog"/>
    <property type="match status" value="1"/>
</dbReference>
<dbReference type="InterPro" id="IPR001557">
    <property type="entry name" value="L-lactate/malate_DH"/>
</dbReference>
<dbReference type="InterPro" id="IPR011304">
    <property type="entry name" value="L-lactate_DH"/>
</dbReference>
<dbReference type="InterPro" id="IPR018177">
    <property type="entry name" value="L-lactate_DH_AS"/>
</dbReference>
<dbReference type="InterPro" id="IPR022383">
    <property type="entry name" value="Lactate/malate_DH_C"/>
</dbReference>
<dbReference type="InterPro" id="IPR001236">
    <property type="entry name" value="Lactate/malate_DH_N"/>
</dbReference>
<dbReference type="InterPro" id="IPR015955">
    <property type="entry name" value="Lactate_DH/Glyco_Ohase_4_C"/>
</dbReference>
<dbReference type="InterPro" id="IPR036291">
    <property type="entry name" value="NAD(P)-bd_dom_sf"/>
</dbReference>
<dbReference type="NCBIfam" id="TIGR01771">
    <property type="entry name" value="L-LDH-NAD"/>
    <property type="match status" value="1"/>
</dbReference>
<dbReference type="NCBIfam" id="NF000824">
    <property type="entry name" value="PRK00066.1"/>
    <property type="match status" value="1"/>
</dbReference>
<dbReference type="PANTHER" id="PTHR43128">
    <property type="entry name" value="L-2-HYDROXYCARBOXYLATE DEHYDROGENASE (NAD(P)(+))"/>
    <property type="match status" value="1"/>
</dbReference>
<dbReference type="PANTHER" id="PTHR43128:SF16">
    <property type="entry name" value="L-LACTATE DEHYDROGENASE"/>
    <property type="match status" value="1"/>
</dbReference>
<dbReference type="Pfam" id="PF02866">
    <property type="entry name" value="Ldh_1_C"/>
    <property type="match status" value="1"/>
</dbReference>
<dbReference type="Pfam" id="PF00056">
    <property type="entry name" value="Ldh_1_N"/>
    <property type="match status" value="1"/>
</dbReference>
<dbReference type="PIRSF" id="PIRSF000102">
    <property type="entry name" value="Lac_mal_DH"/>
    <property type="match status" value="1"/>
</dbReference>
<dbReference type="PRINTS" id="PR00086">
    <property type="entry name" value="LLDHDRGNASE"/>
</dbReference>
<dbReference type="SUPFAM" id="SSF56327">
    <property type="entry name" value="LDH C-terminal domain-like"/>
    <property type="match status" value="1"/>
</dbReference>
<dbReference type="SUPFAM" id="SSF51735">
    <property type="entry name" value="NAD(P)-binding Rossmann-fold domains"/>
    <property type="match status" value="1"/>
</dbReference>
<dbReference type="PROSITE" id="PS00064">
    <property type="entry name" value="L_LDH"/>
    <property type="match status" value="1"/>
</dbReference>
<gene>
    <name evidence="1" type="primary">ldh2</name>
    <name type="ordered locus">lmo1534</name>
</gene>
<comment type="function">
    <text evidence="1">Catalyzes the conversion of lactate to pyruvate.</text>
</comment>
<comment type="catalytic activity">
    <reaction evidence="1">
        <text>(S)-lactate + NAD(+) = pyruvate + NADH + H(+)</text>
        <dbReference type="Rhea" id="RHEA:23444"/>
        <dbReference type="ChEBI" id="CHEBI:15361"/>
        <dbReference type="ChEBI" id="CHEBI:15378"/>
        <dbReference type="ChEBI" id="CHEBI:16651"/>
        <dbReference type="ChEBI" id="CHEBI:57540"/>
        <dbReference type="ChEBI" id="CHEBI:57945"/>
        <dbReference type="EC" id="1.1.1.27"/>
    </reaction>
</comment>
<comment type="pathway">
    <text evidence="1">Fermentation; pyruvate fermentation to lactate; (S)-lactate from pyruvate: step 1/1.</text>
</comment>
<comment type="subunit">
    <text evidence="1">Homotetramer.</text>
</comment>
<comment type="subcellular location">
    <subcellularLocation>
        <location evidence="1">Cytoplasm</location>
    </subcellularLocation>
</comment>
<comment type="similarity">
    <text evidence="1">Belongs to the LDH/MDH superfamily. LDH family.</text>
</comment>
<accession>Q8Y6Z6</accession>
<evidence type="ECO:0000255" key="1">
    <source>
        <dbReference type="HAMAP-Rule" id="MF_00488"/>
    </source>
</evidence>
<reference key="1">
    <citation type="journal article" date="2001" name="Science">
        <title>Comparative genomics of Listeria species.</title>
        <authorList>
            <person name="Glaser P."/>
            <person name="Frangeul L."/>
            <person name="Buchrieser C."/>
            <person name="Rusniok C."/>
            <person name="Amend A."/>
            <person name="Baquero F."/>
            <person name="Berche P."/>
            <person name="Bloecker H."/>
            <person name="Brandt P."/>
            <person name="Chakraborty T."/>
            <person name="Charbit A."/>
            <person name="Chetouani F."/>
            <person name="Couve E."/>
            <person name="de Daruvar A."/>
            <person name="Dehoux P."/>
            <person name="Domann E."/>
            <person name="Dominguez-Bernal G."/>
            <person name="Duchaud E."/>
            <person name="Durant L."/>
            <person name="Dussurget O."/>
            <person name="Entian K.-D."/>
            <person name="Fsihi H."/>
            <person name="Garcia-del Portillo F."/>
            <person name="Garrido P."/>
            <person name="Gautier L."/>
            <person name="Goebel W."/>
            <person name="Gomez-Lopez N."/>
            <person name="Hain T."/>
            <person name="Hauf J."/>
            <person name="Jackson D."/>
            <person name="Jones L.-M."/>
            <person name="Kaerst U."/>
            <person name="Kreft J."/>
            <person name="Kuhn M."/>
            <person name="Kunst F."/>
            <person name="Kurapkat G."/>
            <person name="Madueno E."/>
            <person name="Maitournam A."/>
            <person name="Mata Vicente J."/>
            <person name="Ng E."/>
            <person name="Nedjari H."/>
            <person name="Nordsiek G."/>
            <person name="Novella S."/>
            <person name="de Pablos B."/>
            <person name="Perez-Diaz J.-C."/>
            <person name="Purcell R."/>
            <person name="Remmel B."/>
            <person name="Rose M."/>
            <person name="Schlueter T."/>
            <person name="Simoes N."/>
            <person name="Tierrez A."/>
            <person name="Vazquez-Boland J.-A."/>
            <person name="Voss H."/>
            <person name="Wehland J."/>
            <person name="Cossart P."/>
        </authorList>
    </citation>
    <scope>NUCLEOTIDE SEQUENCE [LARGE SCALE GENOMIC DNA]</scope>
    <source>
        <strain>ATCC BAA-679 / EGD-e</strain>
    </source>
</reference>
<organism>
    <name type="scientific">Listeria monocytogenes serovar 1/2a (strain ATCC BAA-679 / EGD-e)</name>
    <dbReference type="NCBI Taxonomy" id="169963"/>
    <lineage>
        <taxon>Bacteria</taxon>
        <taxon>Bacillati</taxon>
        <taxon>Bacillota</taxon>
        <taxon>Bacilli</taxon>
        <taxon>Bacillales</taxon>
        <taxon>Listeriaceae</taxon>
        <taxon>Listeria</taxon>
    </lineage>
</organism>